<evidence type="ECO:0000255" key="1"/>
<evidence type="ECO:0000256" key="2">
    <source>
        <dbReference type="SAM" id="MobiDB-lite"/>
    </source>
</evidence>
<evidence type="ECO:0000269" key="3">
    <source>
    </source>
</evidence>
<evidence type="ECO:0000305" key="4"/>
<comment type="function">
    <text evidence="3">Probable regulator involved in a circadian clock input pathway, which is required for normal oscillator function. Regulates the expression of clock-regulated genes such as CCA1 and TOC1. Involved in both the phytochrome B (PHYB) and PHYB-independent signaling pathways.</text>
</comment>
<comment type="subcellular location">
    <subcellularLocation>
        <location evidence="3">Cytoplasm</location>
    </subcellularLocation>
    <subcellularLocation>
        <location evidence="3">Nucleus</location>
    </subcellularLocation>
</comment>
<comment type="induction">
    <text evidence="3">By light. Not modulated by far-red light.</text>
</comment>
<comment type="similarity">
    <text evidence="4">Belongs to the SRR1 family.</text>
</comment>
<comment type="sequence caution" evidence="4">
    <conflict type="erroneous initiation">
        <sequence resource="EMBL-CDS" id="BAC43135"/>
    </conflict>
</comment>
<keyword id="KW-0090">Biological rhythms</keyword>
<keyword id="KW-0963">Cytoplasm</keyword>
<keyword id="KW-0539">Nucleus</keyword>
<keyword id="KW-0607">Phytochrome signaling pathway</keyword>
<keyword id="KW-1185">Reference proteome</keyword>
<name>SRR1_ARATH</name>
<gene>
    <name type="primary">SRR1</name>
    <name type="ordered locus">At5g59560</name>
    <name type="ORF">F2O15.220</name>
    <name type="ORF">F2O15.23</name>
</gene>
<organism>
    <name type="scientific">Arabidopsis thaliana</name>
    <name type="common">Mouse-ear cress</name>
    <dbReference type="NCBI Taxonomy" id="3702"/>
    <lineage>
        <taxon>Eukaryota</taxon>
        <taxon>Viridiplantae</taxon>
        <taxon>Streptophyta</taxon>
        <taxon>Embryophyta</taxon>
        <taxon>Tracheophyta</taxon>
        <taxon>Spermatophyta</taxon>
        <taxon>Magnoliopsida</taxon>
        <taxon>eudicotyledons</taxon>
        <taxon>Gunneridae</taxon>
        <taxon>Pentapetalae</taxon>
        <taxon>rosids</taxon>
        <taxon>malvids</taxon>
        <taxon>Brassicales</taxon>
        <taxon>Brassicaceae</taxon>
        <taxon>Camelineae</taxon>
        <taxon>Arabidopsis</taxon>
    </lineage>
</organism>
<feature type="chain" id="PRO_0000186122" description="Protein SENSITIVITY TO RED LIGHT REDUCED 1">
    <location>
        <begin position="1"/>
        <end position="275"/>
    </location>
</feature>
<feature type="region of interest" description="Disordered" evidence="2">
    <location>
        <begin position="1"/>
        <end position="49"/>
    </location>
</feature>
<feature type="short sequence motif" description="Nuclear localization signal" evidence="1">
    <location>
        <begin position="26"/>
        <end position="29"/>
    </location>
</feature>
<feature type="compositionally biased region" description="Polar residues" evidence="2">
    <location>
        <begin position="1"/>
        <end position="11"/>
    </location>
</feature>
<feature type="compositionally biased region" description="Basic residues" evidence="2">
    <location>
        <begin position="23"/>
        <end position="32"/>
    </location>
</feature>
<feature type="sequence conflict" description="In Ref. 5." evidence="4" ref="5">
    <original>G</original>
    <variation>V</variation>
    <location>
        <position position="207"/>
    </location>
</feature>
<feature type="sequence conflict" description="In Ref. 5." evidence="4" ref="5">
    <original>SF</original>
    <variation>RS</variation>
    <location>
        <begin position="209"/>
        <end position="210"/>
    </location>
</feature>
<sequence>METTVKNSSSDGEWKVVLPSKGRQGRRRKPKPKGQAEEEEQPWKSDDLEIDPQRQARLKQKMEISLKKIESSSFYTAFLEQLKSPEVSNQIRLVLGSETQLQMVMYGIGSIESYESPRFQLSIAILMKREFDWVGDNIEVFDPVLSATESSYLESLGCSVLSVNEQARREALKPTLFFMPHCEANLYSNLLQANWRMDRLSKIALFGNSFQMYEEQVSFDAEVICATKRIIAAQRVTSEFAIETESDDYFAAFHDSSWHFFSSGIDSELPLFVSD</sequence>
<reference key="1">
    <citation type="journal article" date="2003" name="Genes Dev.">
        <title>The Arabidopsis SRR1 gene mediates phyB signaling and is required for normal circadian clock function.</title>
        <authorList>
            <person name="Staiger D."/>
            <person name="Allenbach L."/>
            <person name="Salathia N."/>
            <person name="Fiechter V."/>
            <person name="Davis S.J."/>
            <person name="Millar A.J."/>
            <person name="Chory J."/>
            <person name="Fankhauser C."/>
        </authorList>
    </citation>
    <scope>NUCLEOTIDE SEQUENCE</scope>
    <scope>FUNCTION</scope>
    <scope>SUBCELLULAR LOCATION</scope>
    <scope>INDUCTION</scope>
    <source>
        <strain>cv. Columbia</strain>
    </source>
</reference>
<reference key="2">
    <citation type="submission" date="1999-04" db="EMBL/GenBank/DDBJ databases">
        <title>Structural analysis of Arabidopsis thaliana chromosome 5. XI.</title>
        <authorList>
            <person name="Kaneko T."/>
            <person name="Katoh T."/>
            <person name="Asamizu E."/>
            <person name="Sato S."/>
            <person name="Nakamura Y."/>
            <person name="Kotani H."/>
            <person name="Tabata S."/>
        </authorList>
    </citation>
    <scope>NUCLEOTIDE SEQUENCE [LARGE SCALE GENOMIC DNA]</scope>
    <source>
        <strain>cv. Columbia</strain>
    </source>
</reference>
<reference key="3">
    <citation type="journal article" date="2017" name="Plant J.">
        <title>Araport11: a complete reannotation of the Arabidopsis thaliana reference genome.</title>
        <authorList>
            <person name="Cheng C.Y."/>
            <person name="Krishnakumar V."/>
            <person name="Chan A.P."/>
            <person name="Thibaud-Nissen F."/>
            <person name="Schobel S."/>
            <person name="Town C.D."/>
        </authorList>
    </citation>
    <scope>GENOME REANNOTATION</scope>
    <source>
        <strain>cv. Columbia</strain>
    </source>
</reference>
<reference key="4">
    <citation type="submission" date="2002-03" db="EMBL/GenBank/DDBJ databases">
        <title>Full-length cDNA from Arabidopsis thaliana.</title>
        <authorList>
            <person name="Brover V.V."/>
            <person name="Troukhan M.E."/>
            <person name="Alexandrov N.A."/>
            <person name="Lu Y.-P."/>
            <person name="Flavell R.B."/>
            <person name="Feldmann K.A."/>
        </authorList>
    </citation>
    <scope>NUCLEOTIDE SEQUENCE [LARGE SCALE MRNA]</scope>
</reference>
<reference key="5">
    <citation type="journal article" date="2002" name="Science">
        <title>Functional annotation of a full-length Arabidopsis cDNA collection.</title>
        <authorList>
            <person name="Seki M."/>
            <person name="Narusaka M."/>
            <person name="Kamiya A."/>
            <person name="Ishida J."/>
            <person name="Satou M."/>
            <person name="Sakurai T."/>
            <person name="Nakajima M."/>
            <person name="Enju A."/>
            <person name="Akiyama K."/>
            <person name="Oono Y."/>
            <person name="Muramatsu M."/>
            <person name="Hayashizaki Y."/>
            <person name="Kawai J."/>
            <person name="Carninci P."/>
            <person name="Itoh M."/>
            <person name="Ishii Y."/>
            <person name="Arakawa T."/>
            <person name="Shibata K."/>
            <person name="Shinagawa A."/>
            <person name="Shinozaki K."/>
        </authorList>
    </citation>
    <scope>NUCLEOTIDE SEQUENCE [LARGE SCALE MRNA] OF 206-275</scope>
    <source>
        <strain>cv. Columbia</strain>
    </source>
</reference>
<dbReference type="EMBL" id="AY127047">
    <property type="protein sequence ID" value="AAM97478.1"/>
    <property type="molecule type" value="mRNA"/>
</dbReference>
<dbReference type="EMBL" id="AB025604">
    <property type="protein sequence ID" value="BAA97490.1"/>
    <property type="molecule type" value="Genomic_DNA"/>
</dbReference>
<dbReference type="EMBL" id="CP002688">
    <property type="protein sequence ID" value="AED97205.1"/>
    <property type="molecule type" value="Genomic_DNA"/>
</dbReference>
<dbReference type="EMBL" id="CP002688">
    <property type="protein sequence ID" value="AED97206.1"/>
    <property type="molecule type" value="Genomic_DNA"/>
</dbReference>
<dbReference type="EMBL" id="AY084714">
    <property type="protein sequence ID" value="AAM61288.1"/>
    <property type="molecule type" value="mRNA"/>
</dbReference>
<dbReference type="EMBL" id="AK118532">
    <property type="protein sequence ID" value="BAC43135.1"/>
    <property type="status" value="ALT_INIT"/>
    <property type="molecule type" value="mRNA"/>
</dbReference>
<dbReference type="RefSeq" id="NP_200764.1">
    <property type="nucleotide sequence ID" value="NM_125348.4"/>
</dbReference>
<dbReference type="RefSeq" id="NP_851224.1">
    <property type="nucleotide sequence ID" value="NM_180893.2"/>
</dbReference>
<dbReference type="BioGRID" id="21319">
    <property type="interactions" value="1"/>
</dbReference>
<dbReference type="FunCoup" id="Q8GWZ6">
    <property type="interactions" value="2215"/>
</dbReference>
<dbReference type="STRING" id="3702.Q8GWZ6"/>
<dbReference type="iPTMnet" id="Q8GWZ6"/>
<dbReference type="PaxDb" id="3702-AT5G59560.2"/>
<dbReference type="ProteomicsDB" id="226562"/>
<dbReference type="EnsemblPlants" id="AT5G59560.1">
    <property type="protein sequence ID" value="AT5G59560.1"/>
    <property type="gene ID" value="AT5G59560"/>
</dbReference>
<dbReference type="EnsemblPlants" id="AT5G59560.2">
    <property type="protein sequence ID" value="AT5G59560.2"/>
    <property type="gene ID" value="AT5G59560"/>
</dbReference>
<dbReference type="GeneID" id="836075"/>
<dbReference type="Gramene" id="AT5G59560.1">
    <property type="protein sequence ID" value="AT5G59560.1"/>
    <property type="gene ID" value="AT5G59560"/>
</dbReference>
<dbReference type="Gramene" id="AT5G59560.2">
    <property type="protein sequence ID" value="AT5G59560.2"/>
    <property type="gene ID" value="AT5G59560"/>
</dbReference>
<dbReference type="KEGG" id="ath:AT5G59560"/>
<dbReference type="Araport" id="AT5G59560"/>
<dbReference type="TAIR" id="AT5G59560">
    <property type="gene designation" value="SRR1"/>
</dbReference>
<dbReference type="eggNOG" id="KOG3131">
    <property type="taxonomic scope" value="Eukaryota"/>
</dbReference>
<dbReference type="HOGENOM" id="CLU_062516_1_0_1"/>
<dbReference type="InParanoid" id="Q8GWZ6"/>
<dbReference type="OMA" id="SWHFFKL"/>
<dbReference type="OrthoDB" id="551431at2759"/>
<dbReference type="PhylomeDB" id="Q8GWZ6"/>
<dbReference type="PRO" id="PR:Q8GWZ6"/>
<dbReference type="Proteomes" id="UP000006548">
    <property type="component" value="Chromosome 5"/>
</dbReference>
<dbReference type="ExpressionAtlas" id="Q8GWZ6">
    <property type="expression patterns" value="baseline and differential"/>
</dbReference>
<dbReference type="GO" id="GO:0005737">
    <property type="term" value="C:cytoplasm"/>
    <property type="evidence" value="ECO:0000314"/>
    <property type="project" value="UniProtKB"/>
</dbReference>
<dbReference type="GO" id="GO:0005634">
    <property type="term" value="C:nucleus"/>
    <property type="evidence" value="ECO:0000314"/>
    <property type="project" value="UniProtKB"/>
</dbReference>
<dbReference type="GO" id="GO:0007623">
    <property type="term" value="P:circadian rhythm"/>
    <property type="evidence" value="ECO:0000315"/>
    <property type="project" value="UniProtKB"/>
</dbReference>
<dbReference type="GO" id="GO:0010017">
    <property type="term" value="P:red or far-red light signaling pathway"/>
    <property type="evidence" value="ECO:0000315"/>
    <property type="project" value="UniProtKB"/>
</dbReference>
<dbReference type="GO" id="GO:0009585">
    <property type="term" value="P:red, far-red light phototransduction"/>
    <property type="evidence" value="ECO:0000315"/>
    <property type="project" value="TAIR"/>
</dbReference>
<dbReference type="GO" id="GO:0042752">
    <property type="term" value="P:regulation of circadian rhythm"/>
    <property type="evidence" value="ECO:0000315"/>
    <property type="project" value="TAIR"/>
</dbReference>
<dbReference type="InterPro" id="IPR012942">
    <property type="entry name" value="SRR1-like"/>
</dbReference>
<dbReference type="InterPro" id="IPR040044">
    <property type="entry name" value="SRR1L"/>
</dbReference>
<dbReference type="PANTHER" id="PTHR28626">
    <property type="entry name" value="SRR1-LIKE PROTEIN"/>
    <property type="match status" value="1"/>
</dbReference>
<dbReference type="PANTHER" id="PTHR28626:SF3">
    <property type="entry name" value="SRR1-LIKE PROTEIN"/>
    <property type="match status" value="1"/>
</dbReference>
<dbReference type="Pfam" id="PF07985">
    <property type="entry name" value="SRR1"/>
    <property type="match status" value="1"/>
</dbReference>
<protein>
    <recommendedName>
        <fullName>Protein SENSITIVITY TO RED LIGHT REDUCED 1</fullName>
    </recommendedName>
</protein>
<proteinExistence type="evidence at transcript level"/>
<accession>Q8GWZ6</accession>
<accession>Q9LTH5</accession>